<keyword id="KW-1003">Cell membrane</keyword>
<keyword id="KW-0418">Kinase</keyword>
<keyword id="KW-0472">Membrane</keyword>
<keyword id="KW-0597">Phosphoprotein</keyword>
<keyword id="KW-0598">Phosphotransferase system</keyword>
<keyword id="KW-1185">Reference proteome</keyword>
<keyword id="KW-0762">Sugar transport</keyword>
<keyword id="KW-0808">Transferase</keyword>
<keyword id="KW-0812">Transmembrane</keyword>
<keyword id="KW-1133">Transmembrane helix</keyword>
<keyword id="KW-0813">Transport</keyword>
<name>PTTBC_BACSU</name>
<sequence length="470" mass="50000">MGELNKSARQIVEAVGGAENIAAATHCVTRLRFALIDESKVDQEMLDQIDVVKGSFSTNGQFQVVIGQGTVNKVYAELVKETGIGESTKDEVKKASEKNMNPLQRAVKTLADIFIPILPAIVTAGLLMGINNILTAEGIFFSTKSIVQVYPQWADLANMINLIAGTAFTFLPALIGWSAVKRFGGNPLLGIVLGVMLVHPDLLNAWGYGAAEQSGEIPVWNLFGLEVQKVGYQGQVLPILLASYMLAKIEVFLTKRTPEGIQLLVVAPITLLLTGFASFIIIGPITFAIGNVLTSGLISVFGSFAALGGLLYGGFYSALVITGMHHTFLAVDLQLIGSKLGGTFLWPMLALSNIAQGSAALAMMFIVKDEKQKGLSLTSGISAYLGITEPAIFGVNLRYRFPFIIAMVSSGLAGMYISSQGVLASSVGVGGVPGIFSIMSQYWGAFAIGMAIVLIVPFAGTYAYARFKHK</sequence>
<feature type="chain" id="PRO_0000186678" description="PTS system trehalose-specific EIIBC component">
    <location>
        <begin position="1"/>
        <end position="470"/>
    </location>
</feature>
<feature type="transmembrane region" description="Helical" evidence="3">
    <location>
        <begin position="110"/>
        <end position="130"/>
    </location>
</feature>
<feature type="transmembrane region" description="Helical" evidence="3">
    <location>
        <begin position="160"/>
        <end position="180"/>
    </location>
</feature>
<feature type="transmembrane region" description="Helical" evidence="3">
    <location>
        <begin position="183"/>
        <end position="203"/>
    </location>
</feature>
<feature type="transmembrane region" description="Helical" evidence="3">
    <location>
        <begin position="234"/>
        <end position="254"/>
    </location>
</feature>
<feature type="transmembrane region" description="Helical" evidence="3">
    <location>
        <begin position="263"/>
        <end position="283"/>
    </location>
</feature>
<feature type="transmembrane region" description="Helical" evidence="3">
    <location>
        <begin position="301"/>
        <end position="321"/>
    </location>
</feature>
<feature type="transmembrane region" description="Helical" evidence="3">
    <location>
        <begin position="326"/>
        <end position="346"/>
    </location>
</feature>
<feature type="transmembrane region" description="Helical" evidence="3">
    <location>
        <begin position="347"/>
        <end position="367"/>
    </location>
</feature>
<feature type="transmembrane region" description="Helical" evidence="3">
    <location>
        <begin position="403"/>
        <end position="423"/>
    </location>
</feature>
<feature type="transmembrane region" description="Helical" evidence="3">
    <location>
        <begin position="443"/>
        <end position="463"/>
    </location>
</feature>
<feature type="domain" description="PTS EIIB type-1" evidence="2">
    <location>
        <begin position="1"/>
        <end position="88"/>
    </location>
</feature>
<feature type="domain" description="PTS EIIC type-1" evidence="3">
    <location>
        <begin position="108"/>
        <end position="470"/>
    </location>
</feature>
<feature type="active site" description="Phosphocysteine intermediate; for EIIB activity" evidence="2">
    <location>
        <position position="27"/>
    </location>
</feature>
<feature type="modified residue" description="Phosphocysteine; by EIIA" evidence="1 6">
    <location>
        <position position="27"/>
    </location>
</feature>
<feature type="sequence conflict" description="In Ref. 1; CAA91014." evidence="6" ref="1">
    <original>F</original>
    <variation>S</variation>
    <location>
        <position position="140"/>
    </location>
</feature>
<feature type="sequence conflict" description="In Ref. 1; CAA91014 and 5; CAA56494." evidence="6" ref="1 5">
    <original>M</original>
    <variation>L</variation>
    <location>
        <position position="363"/>
    </location>
</feature>
<feature type="sequence conflict" description="In Ref. 1; CAA91014 and 5; CAA56494." evidence="6" ref="1 5">
    <original>A</original>
    <variation>G</variation>
    <location>
        <position position="465"/>
    </location>
</feature>
<evidence type="ECO:0000250" key="1">
    <source>
        <dbReference type="UniProtKB" id="P36672"/>
    </source>
</evidence>
<evidence type="ECO:0000255" key="2">
    <source>
        <dbReference type="PROSITE-ProRule" id="PRU00421"/>
    </source>
</evidence>
<evidence type="ECO:0000255" key="3">
    <source>
        <dbReference type="PROSITE-ProRule" id="PRU00426"/>
    </source>
</evidence>
<evidence type="ECO:0000269" key="4">
    <source>
    </source>
</evidence>
<evidence type="ECO:0000303" key="5">
    <source>
    </source>
</evidence>
<evidence type="ECO:0000305" key="6"/>
<evidence type="ECO:0000305" key="7">
    <source>
    </source>
</evidence>
<dbReference type="EC" id="2.7.1.201" evidence="1"/>
<dbReference type="EMBL" id="Z54245">
    <property type="protein sequence ID" value="CAA91014.1"/>
    <property type="molecule type" value="Genomic_DNA"/>
</dbReference>
<dbReference type="EMBL" id="D83967">
    <property type="protein sequence ID" value="BAA23409.1"/>
    <property type="molecule type" value="Genomic_DNA"/>
</dbReference>
<dbReference type="EMBL" id="D86417">
    <property type="protein sequence ID" value="BAA22289.1"/>
    <property type="molecule type" value="Genomic_DNA"/>
</dbReference>
<dbReference type="EMBL" id="AL009126">
    <property type="protein sequence ID" value="CAB12609.1"/>
    <property type="molecule type" value="Genomic_DNA"/>
</dbReference>
<dbReference type="EMBL" id="X80203">
    <property type="protein sequence ID" value="CAA56494.1"/>
    <property type="molecule type" value="Genomic_DNA"/>
</dbReference>
<dbReference type="PIR" id="C69725">
    <property type="entry name" value="C69725"/>
</dbReference>
<dbReference type="RefSeq" id="NP_388661.1">
    <property type="nucleotide sequence ID" value="NC_000964.3"/>
</dbReference>
<dbReference type="RefSeq" id="WP_003233682.1">
    <property type="nucleotide sequence ID" value="NZ_OZ025638.1"/>
</dbReference>
<dbReference type="SMR" id="P39794"/>
<dbReference type="FunCoup" id="P39794">
    <property type="interactions" value="97"/>
</dbReference>
<dbReference type="IntAct" id="P39794">
    <property type="interactions" value="1"/>
</dbReference>
<dbReference type="STRING" id="224308.BSU07800"/>
<dbReference type="TCDB" id="4.A.1.2.8">
    <property type="family name" value="the pts glucose-glucoside (glc) family"/>
</dbReference>
<dbReference type="jPOST" id="P39794"/>
<dbReference type="PaxDb" id="224308-BSU07800"/>
<dbReference type="EnsemblBacteria" id="CAB12609">
    <property type="protein sequence ID" value="CAB12609"/>
    <property type="gene ID" value="BSU_07800"/>
</dbReference>
<dbReference type="GeneID" id="939188"/>
<dbReference type="KEGG" id="bsu:BSU07800"/>
<dbReference type="PATRIC" id="fig|224308.179.peg.844"/>
<dbReference type="eggNOG" id="COG1263">
    <property type="taxonomic scope" value="Bacteria"/>
</dbReference>
<dbReference type="eggNOG" id="COG1264">
    <property type="taxonomic scope" value="Bacteria"/>
</dbReference>
<dbReference type="InParanoid" id="P39794"/>
<dbReference type="OrthoDB" id="9769191at2"/>
<dbReference type="PhylomeDB" id="P39794"/>
<dbReference type="BioCyc" id="BSUB:BSU07800-MONOMER"/>
<dbReference type="Proteomes" id="UP000001570">
    <property type="component" value="Chromosome"/>
</dbReference>
<dbReference type="GO" id="GO:0005886">
    <property type="term" value="C:plasma membrane"/>
    <property type="evidence" value="ECO:0000318"/>
    <property type="project" value="GO_Central"/>
</dbReference>
<dbReference type="GO" id="GO:0016301">
    <property type="term" value="F:kinase activity"/>
    <property type="evidence" value="ECO:0007669"/>
    <property type="project" value="UniProtKB-KW"/>
</dbReference>
<dbReference type="GO" id="GO:0008982">
    <property type="term" value="F:protein-N(PI)-phosphohistidine-sugar phosphotransferase activity"/>
    <property type="evidence" value="ECO:0007669"/>
    <property type="project" value="InterPro"/>
</dbReference>
<dbReference type="GO" id="GO:0090589">
    <property type="term" value="F:protein-phosphocysteine-trehalose phosphotransferase system transporter activity"/>
    <property type="evidence" value="ECO:0000318"/>
    <property type="project" value="GO_Central"/>
</dbReference>
<dbReference type="GO" id="GO:0015574">
    <property type="term" value="F:trehalose transmembrane transporter activity"/>
    <property type="evidence" value="ECO:0007669"/>
    <property type="project" value="InterPro"/>
</dbReference>
<dbReference type="GO" id="GO:0009401">
    <property type="term" value="P:phosphoenolpyruvate-dependent sugar phosphotransferase system"/>
    <property type="evidence" value="ECO:0000318"/>
    <property type="project" value="GO_Central"/>
</dbReference>
<dbReference type="GO" id="GO:0015771">
    <property type="term" value="P:trehalose transport"/>
    <property type="evidence" value="ECO:0000318"/>
    <property type="project" value="GO_Central"/>
</dbReference>
<dbReference type="CDD" id="cd00212">
    <property type="entry name" value="PTS_IIB_glc"/>
    <property type="match status" value="1"/>
</dbReference>
<dbReference type="FunFam" id="3.30.1360.60:FF:000001">
    <property type="entry name" value="PTS system glucose-specific IIBC component PtsG"/>
    <property type="match status" value="1"/>
</dbReference>
<dbReference type="Gene3D" id="3.30.1360.60">
    <property type="entry name" value="Glucose permease domain IIB"/>
    <property type="match status" value="1"/>
</dbReference>
<dbReference type="InterPro" id="IPR036878">
    <property type="entry name" value="Glu_permease_IIB"/>
</dbReference>
<dbReference type="InterPro" id="IPR018113">
    <property type="entry name" value="PTrfase_EIIB_Cys"/>
</dbReference>
<dbReference type="InterPro" id="IPR003352">
    <property type="entry name" value="PTS_EIIC"/>
</dbReference>
<dbReference type="InterPro" id="IPR013013">
    <property type="entry name" value="PTS_EIIC_1"/>
</dbReference>
<dbReference type="InterPro" id="IPR001996">
    <property type="entry name" value="PTS_IIB_1"/>
</dbReference>
<dbReference type="InterPro" id="IPR011296">
    <property type="entry name" value="PTS_IIBC_treh"/>
</dbReference>
<dbReference type="InterPro" id="IPR004719">
    <property type="entry name" value="PTS_maltose/Glc_sub_IIC"/>
</dbReference>
<dbReference type="InterPro" id="IPR050558">
    <property type="entry name" value="PTS_Sugar-Specific_Components"/>
</dbReference>
<dbReference type="NCBIfam" id="TIGR00826">
    <property type="entry name" value="EIIB_glc"/>
    <property type="match status" value="1"/>
</dbReference>
<dbReference type="NCBIfam" id="NF008236">
    <property type="entry name" value="PRK11007.1"/>
    <property type="match status" value="1"/>
</dbReference>
<dbReference type="NCBIfam" id="TIGR00852">
    <property type="entry name" value="pts-Glc"/>
    <property type="match status" value="1"/>
</dbReference>
<dbReference type="NCBIfam" id="TIGR01992">
    <property type="entry name" value="PTS-IIBC-Tre"/>
    <property type="match status" value="1"/>
</dbReference>
<dbReference type="PANTHER" id="PTHR30175">
    <property type="entry name" value="PHOSPHOTRANSFERASE SYSTEM TRANSPORT PROTEIN"/>
    <property type="match status" value="1"/>
</dbReference>
<dbReference type="PANTHER" id="PTHR30175:SF4">
    <property type="entry name" value="PTS SYSTEM TREHALOSE-SPECIFIC EIIBC COMPONENT"/>
    <property type="match status" value="1"/>
</dbReference>
<dbReference type="Pfam" id="PF00367">
    <property type="entry name" value="PTS_EIIB"/>
    <property type="match status" value="1"/>
</dbReference>
<dbReference type="Pfam" id="PF02378">
    <property type="entry name" value="PTS_EIIC"/>
    <property type="match status" value="1"/>
</dbReference>
<dbReference type="SUPFAM" id="SSF55604">
    <property type="entry name" value="Glucose permease domain IIB"/>
    <property type="match status" value="1"/>
</dbReference>
<dbReference type="PROSITE" id="PS51098">
    <property type="entry name" value="PTS_EIIB_TYPE_1"/>
    <property type="match status" value="1"/>
</dbReference>
<dbReference type="PROSITE" id="PS01035">
    <property type="entry name" value="PTS_EIIB_TYPE_1_CYS"/>
    <property type="match status" value="1"/>
</dbReference>
<dbReference type="PROSITE" id="PS51103">
    <property type="entry name" value="PTS_EIIC_TYPE_1"/>
    <property type="match status" value="1"/>
</dbReference>
<accession>P39794</accession>
<accession>O34771</accession>
<proteinExistence type="evidence at transcript level"/>
<comment type="function">
    <text evidence="1 7">The phosphoenolpyruvate-dependent sugar phosphotransferase system (sugar PTS), a major carbohydrate active transport system, catalyzes the phosphorylation of incoming sugar substrates concomitantly with their translocation across the cell membrane. This system is involved in trehalose transport.</text>
</comment>
<comment type="catalytic activity">
    <reaction evidence="1">
        <text>alpha,alpha-trehalose(out) + N(pros)-phospho-L-histidyl-[protein] = alpha,alpha-trehalose 6-phosphate(in) + L-histidyl-[protein]</text>
        <dbReference type="Rhea" id="RHEA:33371"/>
        <dbReference type="Rhea" id="RHEA-COMP:9745"/>
        <dbReference type="Rhea" id="RHEA-COMP:9746"/>
        <dbReference type="ChEBI" id="CHEBI:16551"/>
        <dbReference type="ChEBI" id="CHEBI:29979"/>
        <dbReference type="ChEBI" id="CHEBI:58429"/>
        <dbReference type="ChEBI" id="CHEBI:64837"/>
        <dbReference type="EC" id="2.7.1.201"/>
    </reaction>
</comment>
<comment type="subcellular location">
    <subcellularLocation>
        <location evidence="3">Cell membrane</location>
        <topology evidence="3">Multi-pass membrane protein</topology>
    </subcellularLocation>
</comment>
<comment type="induction">
    <text evidence="4">Induced by trehalose-6-phosphate. Repressed by TreR.</text>
</comment>
<comment type="domain">
    <text evidence="1 2">The PTS EIIB type-1 domain is phosphorylated by phospho-EIIA-Glc (EIII-Glc) on a cysteinyl residue. Then, it transfers the phosphoryl group to the sugar substrate concomitantly with the sugar uptake processed by the PTS EIIC type-1 domain.</text>
</comment>
<comment type="domain">
    <text evidence="3">The EIIC domain type-1 forms the PTS system translocation channel and contains the specific substrate-binding site.</text>
</comment>
<comment type="miscellaneous">
    <text evidence="1 6">B.subtilis does not possess a trehalose-specific phosphotransferase enzyme IIA component, however it seems that it use the glucose-specific phosphotransferase enzyme IIA component to delivers trehalose-6-phosphate into the cell.</text>
</comment>
<protein>
    <recommendedName>
        <fullName evidence="5">PTS system trehalose-specific EIIBC component</fullName>
    </recommendedName>
    <alternativeName>
        <fullName evidence="5">EIIBC-Tre</fullName>
        <shortName evidence="5">EII-Tre</shortName>
    </alternativeName>
    <domain>
        <recommendedName>
            <fullName evidence="5">Trehalose-specific phosphotransferase enzyme IIB component</fullName>
            <ecNumber evidence="1">2.7.1.201</ecNumber>
        </recommendedName>
        <alternativeName>
            <fullName evidence="5">PTS system trehalose-specific EIIB component</fullName>
        </alternativeName>
    </domain>
    <domain>
        <recommendedName>
            <fullName evidence="5">Trehalose permease IIC component</fullName>
        </recommendedName>
        <alternativeName>
            <fullName evidence="5">PTS system trehalose-specific EIIC component</fullName>
        </alternativeName>
    </domain>
</protein>
<organism>
    <name type="scientific">Bacillus subtilis (strain 168)</name>
    <dbReference type="NCBI Taxonomy" id="224308"/>
    <lineage>
        <taxon>Bacteria</taxon>
        <taxon>Bacillati</taxon>
        <taxon>Bacillota</taxon>
        <taxon>Bacilli</taxon>
        <taxon>Bacillales</taxon>
        <taxon>Bacillaceae</taxon>
        <taxon>Bacillus</taxon>
    </lineage>
</organism>
<reference key="1">
    <citation type="journal article" date="1996" name="Gene">
        <title>Analysis of DNA flanking the treA gene of Bacillus subtilis reveals genes encoding a putative specific enzyme IITre and a potential regulator of the trehalose operon.</title>
        <authorList>
            <person name="Schoeck F."/>
            <person name="Dahl M.K."/>
        </authorList>
    </citation>
    <scope>NUCLEOTIDE SEQUENCE [GENOMIC DNA]</scope>
    <scope>FUNCTION</scope>
    <source>
        <strain>168 / Marburg / ATCC 6051 / DSM 10 / JCM 1465 / NBRC 13719 / NCIMB 3610 / NRRL NRS-744 / VKM B-501</strain>
    </source>
</reference>
<reference key="2">
    <citation type="journal article" date="1996" name="Microbiology">
        <title>Cloning and sequencing of a 40.6 kb segment in the 73 degrees-76 degrees region of the Bacillus subtilis chromosome containing genes for trehalose metabolism and acetoin utilization.</title>
        <authorList>
            <person name="Yamamoto H."/>
            <person name="Uchiyama S."/>
            <person name="Sekiguchi J."/>
        </authorList>
    </citation>
    <scope>NUCLEOTIDE SEQUENCE [GENOMIC DNA]</scope>
    <source>
        <strain>168 / AC327</strain>
    </source>
</reference>
<reference key="3">
    <citation type="journal article" date="1997" name="Gene">
        <title>Cloning and sequencing of a 35.7 kb in the 70 degree-73 degree region of the Bacillus subtilis genome reveal genes for a new two-component system, three spore germination proteins, an iron uptake system and a general stress response protein.</title>
        <authorList>
            <person name="Yamamoto H."/>
            <person name="Uchiyama S."/>
            <person name="Nugroho F.A."/>
            <person name="Sekiguchi J."/>
        </authorList>
    </citation>
    <scope>NUCLEOTIDE SEQUENCE [GENOMIC DNA]</scope>
    <source>
        <strain>168 / AC327</strain>
    </source>
</reference>
<reference key="4">
    <citation type="journal article" date="1997" name="Nature">
        <title>The complete genome sequence of the Gram-positive bacterium Bacillus subtilis.</title>
        <authorList>
            <person name="Kunst F."/>
            <person name="Ogasawara N."/>
            <person name="Moszer I."/>
            <person name="Albertini A.M."/>
            <person name="Alloni G."/>
            <person name="Azevedo V."/>
            <person name="Bertero M.G."/>
            <person name="Bessieres P."/>
            <person name="Bolotin A."/>
            <person name="Borchert S."/>
            <person name="Borriss R."/>
            <person name="Boursier L."/>
            <person name="Brans A."/>
            <person name="Braun M."/>
            <person name="Brignell S.C."/>
            <person name="Bron S."/>
            <person name="Brouillet S."/>
            <person name="Bruschi C.V."/>
            <person name="Caldwell B."/>
            <person name="Capuano V."/>
            <person name="Carter N.M."/>
            <person name="Choi S.-K."/>
            <person name="Codani J.-J."/>
            <person name="Connerton I.F."/>
            <person name="Cummings N.J."/>
            <person name="Daniel R.A."/>
            <person name="Denizot F."/>
            <person name="Devine K.M."/>
            <person name="Duesterhoeft A."/>
            <person name="Ehrlich S.D."/>
            <person name="Emmerson P.T."/>
            <person name="Entian K.-D."/>
            <person name="Errington J."/>
            <person name="Fabret C."/>
            <person name="Ferrari E."/>
            <person name="Foulger D."/>
            <person name="Fritz C."/>
            <person name="Fujita M."/>
            <person name="Fujita Y."/>
            <person name="Fuma S."/>
            <person name="Galizzi A."/>
            <person name="Galleron N."/>
            <person name="Ghim S.-Y."/>
            <person name="Glaser P."/>
            <person name="Goffeau A."/>
            <person name="Golightly E.J."/>
            <person name="Grandi G."/>
            <person name="Guiseppi G."/>
            <person name="Guy B.J."/>
            <person name="Haga K."/>
            <person name="Haiech J."/>
            <person name="Harwood C.R."/>
            <person name="Henaut A."/>
            <person name="Hilbert H."/>
            <person name="Holsappel S."/>
            <person name="Hosono S."/>
            <person name="Hullo M.-F."/>
            <person name="Itaya M."/>
            <person name="Jones L.-M."/>
            <person name="Joris B."/>
            <person name="Karamata D."/>
            <person name="Kasahara Y."/>
            <person name="Klaerr-Blanchard M."/>
            <person name="Klein C."/>
            <person name="Kobayashi Y."/>
            <person name="Koetter P."/>
            <person name="Koningstein G."/>
            <person name="Krogh S."/>
            <person name="Kumano M."/>
            <person name="Kurita K."/>
            <person name="Lapidus A."/>
            <person name="Lardinois S."/>
            <person name="Lauber J."/>
            <person name="Lazarevic V."/>
            <person name="Lee S.-M."/>
            <person name="Levine A."/>
            <person name="Liu H."/>
            <person name="Masuda S."/>
            <person name="Mauel C."/>
            <person name="Medigue C."/>
            <person name="Medina N."/>
            <person name="Mellado R.P."/>
            <person name="Mizuno M."/>
            <person name="Moestl D."/>
            <person name="Nakai S."/>
            <person name="Noback M."/>
            <person name="Noone D."/>
            <person name="O'Reilly M."/>
            <person name="Ogawa K."/>
            <person name="Ogiwara A."/>
            <person name="Oudega B."/>
            <person name="Park S.-H."/>
            <person name="Parro V."/>
            <person name="Pohl T.M."/>
            <person name="Portetelle D."/>
            <person name="Porwollik S."/>
            <person name="Prescott A.M."/>
            <person name="Presecan E."/>
            <person name="Pujic P."/>
            <person name="Purnelle B."/>
            <person name="Rapoport G."/>
            <person name="Rey M."/>
            <person name="Reynolds S."/>
            <person name="Rieger M."/>
            <person name="Rivolta C."/>
            <person name="Rocha E."/>
            <person name="Roche B."/>
            <person name="Rose M."/>
            <person name="Sadaie Y."/>
            <person name="Sato T."/>
            <person name="Scanlan E."/>
            <person name="Schleich S."/>
            <person name="Schroeter R."/>
            <person name="Scoffone F."/>
            <person name="Sekiguchi J."/>
            <person name="Sekowska A."/>
            <person name="Seror S.J."/>
            <person name="Serror P."/>
            <person name="Shin B.-S."/>
            <person name="Soldo B."/>
            <person name="Sorokin A."/>
            <person name="Tacconi E."/>
            <person name="Takagi T."/>
            <person name="Takahashi H."/>
            <person name="Takemaru K."/>
            <person name="Takeuchi M."/>
            <person name="Tamakoshi A."/>
            <person name="Tanaka T."/>
            <person name="Terpstra P."/>
            <person name="Tognoni A."/>
            <person name="Tosato V."/>
            <person name="Uchiyama S."/>
            <person name="Vandenbol M."/>
            <person name="Vannier F."/>
            <person name="Vassarotti A."/>
            <person name="Viari A."/>
            <person name="Wambutt R."/>
            <person name="Wedler E."/>
            <person name="Wedler H."/>
            <person name="Weitzenegger T."/>
            <person name="Winters P."/>
            <person name="Wipat A."/>
            <person name="Yamamoto H."/>
            <person name="Yamane K."/>
            <person name="Yasumoto K."/>
            <person name="Yata K."/>
            <person name="Yoshida K."/>
            <person name="Yoshikawa H.-F."/>
            <person name="Zumstein E."/>
            <person name="Yoshikawa H."/>
            <person name="Danchin A."/>
        </authorList>
    </citation>
    <scope>NUCLEOTIDE SEQUENCE [LARGE SCALE GENOMIC DNA]</scope>
    <source>
        <strain>168</strain>
    </source>
</reference>
<reference key="5">
    <citation type="journal article" date="1995" name="Mol. Microbiol.">
        <title>Cleavage of trehalose-phosphate in Bacillus subtilis is catalysed by a phospho-alpha-(1-1)-glucosidase encoded by the treA gene.</title>
        <authorList>
            <person name="Helfert C."/>
            <person name="Gotsche S."/>
            <person name="Dahl M.K."/>
        </authorList>
    </citation>
    <scope>NUCLEOTIDE SEQUENCE [GENOMIC DNA] OF 324-470</scope>
    <source>
        <strain>168</strain>
    </source>
</reference>
<reference key="6">
    <citation type="journal article" date="1996" name="J. Bacteriol.">
        <title>Expression of the tre operon of Bacillus subtilis 168 is regulated by the repressor TreR.</title>
        <authorList>
            <person name="Schoeck F."/>
            <person name="Dahl M.K."/>
        </authorList>
    </citation>
    <scope>INDUCTION</scope>
</reference>
<gene>
    <name type="primary">treP</name>
    <name type="synonym">treB</name>
    <name type="ordered locus">BSU07800</name>
</gene>